<proteinExistence type="inferred from homology"/>
<gene>
    <name type="ORF">CG10674</name>
</gene>
<accession>Q9VRJ8</accession>
<accession>Q4QPW7</accession>
<feature type="chain" id="PRO_0000071609" description="Protein Asterix">
    <location>
        <begin position="1"/>
        <end position="108"/>
    </location>
</feature>
<feature type="transmembrane region" description="Helical" evidence="1">
    <location>
        <begin position="80"/>
        <end position="96"/>
    </location>
</feature>
<feature type="region of interest" description="Disordered" evidence="2">
    <location>
        <begin position="1"/>
        <end position="29"/>
    </location>
</feature>
<evidence type="ECO:0000255" key="1"/>
<evidence type="ECO:0000256" key="2">
    <source>
        <dbReference type="SAM" id="MobiDB-lite"/>
    </source>
</evidence>
<evidence type="ECO:0000305" key="3"/>
<sequence length="108" mass="12082">MNMTVDPRRKEKINRYKAPKNQGQSGGANEDMMPDYMNILGMIFSMCGLMMKLKWCAWFALYCSCISFASSRASDDAKQVLSSFMLSVSAVVMSYLQNPAAMTPPWAS</sequence>
<comment type="subcellular location">
    <subcellularLocation>
        <location evidence="3">Membrane</location>
        <topology evidence="3">Single-pass membrane protein</topology>
    </subcellularLocation>
</comment>
<comment type="similarity">
    <text evidence="3">Belongs to the Asterix family.</text>
</comment>
<reference key="1">
    <citation type="journal article" date="2000" name="Science">
        <title>The genome sequence of Drosophila melanogaster.</title>
        <authorList>
            <person name="Adams M.D."/>
            <person name="Celniker S.E."/>
            <person name="Holt R.A."/>
            <person name="Evans C.A."/>
            <person name="Gocayne J.D."/>
            <person name="Amanatides P.G."/>
            <person name="Scherer S.E."/>
            <person name="Li P.W."/>
            <person name="Hoskins R.A."/>
            <person name="Galle R.F."/>
            <person name="George R.A."/>
            <person name="Lewis S.E."/>
            <person name="Richards S."/>
            <person name="Ashburner M."/>
            <person name="Henderson S.N."/>
            <person name="Sutton G.G."/>
            <person name="Wortman J.R."/>
            <person name="Yandell M.D."/>
            <person name="Zhang Q."/>
            <person name="Chen L.X."/>
            <person name="Brandon R.C."/>
            <person name="Rogers Y.-H.C."/>
            <person name="Blazej R.G."/>
            <person name="Champe M."/>
            <person name="Pfeiffer B.D."/>
            <person name="Wan K.H."/>
            <person name="Doyle C."/>
            <person name="Baxter E.G."/>
            <person name="Helt G."/>
            <person name="Nelson C.R."/>
            <person name="Miklos G.L.G."/>
            <person name="Abril J.F."/>
            <person name="Agbayani A."/>
            <person name="An H.-J."/>
            <person name="Andrews-Pfannkoch C."/>
            <person name="Baldwin D."/>
            <person name="Ballew R.M."/>
            <person name="Basu A."/>
            <person name="Baxendale J."/>
            <person name="Bayraktaroglu L."/>
            <person name="Beasley E.M."/>
            <person name="Beeson K.Y."/>
            <person name="Benos P.V."/>
            <person name="Berman B.P."/>
            <person name="Bhandari D."/>
            <person name="Bolshakov S."/>
            <person name="Borkova D."/>
            <person name="Botchan M.R."/>
            <person name="Bouck J."/>
            <person name="Brokstein P."/>
            <person name="Brottier P."/>
            <person name="Burtis K.C."/>
            <person name="Busam D.A."/>
            <person name="Butler H."/>
            <person name="Cadieu E."/>
            <person name="Center A."/>
            <person name="Chandra I."/>
            <person name="Cherry J.M."/>
            <person name="Cawley S."/>
            <person name="Dahlke C."/>
            <person name="Davenport L.B."/>
            <person name="Davies P."/>
            <person name="de Pablos B."/>
            <person name="Delcher A."/>
            <person name="Deng Z."/>
            <person name="Mays A.D."/>
            <person name="Dew I."/>
            <person name="Dietz S.M."/>
            <person name="Dodson K."/>
            <person name="Doup L.E."/>
            <person name="Downes M."/>
            <person name="Dugan-Rocha S."/>
            <person name="Dunkov B.C."/>
            <person name="Dunn P."/>
            <person name="Durbin K.J."/>
            <person name="Evangelista C.C."/>
            <person name="Ferraz C."/>
            <person name="Ferriera S."/>
            <person name="Fleischmann W."/>
            <person name="Fosler C."/>
            <person name="Gabrielian A.E."/>
            <person name="Garg N.S."/>
            <person name="Gelbart W.M."/>
            <person name="Glasser K."/>
            <person name="Glodek A."/>
            <person name="Gong F."/>
            <person name="Gorrell J.H."/>
            <person name="Gu Z."/>
            <person name="Guan P."/>
            <person name="Harris M."/>
            <person name="Harris N.L."/>
            <person name="Harvey D.A."/>
            <person name="Heiman T.J."/>
            <person name="Hernandez J.R."/>
            <person name="Houck J."/>
            <person name="Hostin D."/>
            <person name="Houston K.A."/>
            <person name="Howland T.J."/>
            <person name="Wei M.-H."/>
            <person name="Ibegwam C."/>
            <person name="Jalali M."/>
            <person name="Kalush F."/>
            <person name="Karpen G.H."/>
            <person name="Ke Z."/>
            <person name="Kennison J.A."/>
            <person name="Ketchum K.A."/>
            <person name="Kimmel B.E."/>
            <person name="Kodira C.D."/>
            <person name="Kraft C.L."/>
            <person name="Kravitz S."/>
            <person name="Kulp D."/>
            <person name="Lai Z."/>
            <person name="Lasko P."/>
            <person name="Lei Y."/>
            <person name="Levitsky A.A."/>
            <person name="Li J.H."/>
            <person name="Li Z."/>
            <person name="Liang Y."/>
            <person name="Lin X."/>
            <person name="Liu X."/>
            <person name="Mattei B."/>
            <person name="McIntosh T.C."/>
            <person name="McLeod M.P."/>
            <person name="McPherson D."/>
            <person name="Merkulov G."/>
            <person name="Milshina N.V."/>
            <person name="Mobarry C."/>
            <person name="Morris J."/>
            <person name="Moshrefi A."/>
            <person name="Mount S.M."/>
            <person name="Moy M."/>
            <person name="Murphy B."/>
            <person name="Murphy L."/>
            <person name="Muzny D.M."/>
            <person name="Nelson D.L."/>
            <person name="Nelson D.R."/>
            <person name="Nelson K.A."/>
            <person name="Nixon K."/>
            <person name="Nusskern D.R."/>
            <person name="Pacleb J.M."/>
            <person name="Palazzolo M."/>
            <person name="Pittman G.S."/>
            <person name="Pan S."/>
            <person name="Pollard J."/>
            <person name="Puri V."/>
            <person name="Reese M.G."/>
            <person name="Reinert K."/>
            <person name="Remington K."/>
            <person name="Saunders R.D.C."/>
            <person name="Scheeler F."/>
            <person name="Shen H."/>
            <person name="Shue B.C."/>
            <person name="Siden-Kiamos I."/>
            <person name="Simpson M."/>
            <person name="Skupski M.P."/>
            <person name="Smith T.J."/>
            <person name="Spier E."/>
            <person name="Spradling A.C."/>
            <person name="Stapleton M."/>
            <person name="Strong R."/>
            <person name="Sun E."/>
            <person name="Svirskas R."/>
            <person name="Tector C."/>
            <person name="Turner R."/>
            <person name="Venter E."/>
            <person name="Wang A.H."/>
            <person name="Wang X."/>
            <person name="Wang Z.-Y."/>
            <person name="Wassarman D.A."/>
            <person name="Weinstock G.M."/>
            <person name="Weissenbach J."/>
            <person name="Williams S.M."/>
            <person name="Woodage T."/>
            <person name="Worley K.C."/>
            <person name="Wu D."/>
            <person name="Yang S."/>
            <person name="Yao Q.A."/>
            <person name="Ye J."/>
            <person name="Yeh R.-F."/>
            <person name="Zaveri J.S."/>
            <person name="Zhan M."/>
            <person name="Zhang G."/>
            <person name="Zhao Q."/>
            <person name="Zheng L."/>
            <person name="Zheng X.H."/>
            <person name="Zhong F.N."/>
            <person name="Zhong W."/>
            <person name="Zhou X."/>
            <person name="Zhu S.C."/>
            <person name="Zhu X."/>
            <person name="Smith H.O."/>
            <person name="Gibbs R.A."/>
            <person name="Myers E.W."/>
            <person name="Rubin G.M."/>
            <person name="Venter J.C."/>
        </authorList>
    </citation>
    <scope>NUCLEOTIDE SEQUENCE [LARGE SCALE GENOMIC DNA]</scope>
    <source>
        <strain>Berkeley</strain>
    </source>
</reference>
<reference key="2">
    <citation type="journal article" date="2002" name="Genome Biol.">
        <title>Annotation of the Drosophila melanogaster euchromatic genome: a systematic review.</title>
        <authorList>
            <person name="Misra S."/>
            <person name="Crosby M.A."/>
            <person name="Mungall C.J."/>
            <person name="Matthews B.B."/>
            <person name="Campbell K.S."/>
            <person name="Hradecky P."/>
            <person name="Huang Y."/>
            <person name="Kaminker J.S."/>
            <person name="Millburn G.H."/>
            <person name="Prochnik S.E."/>
            <person name="Smith C.D."/>
            <person name="Tupy J.L."/>
            <person name="Whitfield E.J."/>
            <person name="Bayraktaroglu L."/>
            <person name="Berman B.P."/>
            <person name="Bettencourt B.R."/>
            <person name="Celniker S.E."/>
            <person name="de Grey A.D.N.J."/>
            <person name="Drysdale R.A."/>
            <person name="Harris N.L."/>
            <person name="Richter J."/>
            <person name="Russo S."/>
            <person name="Schroeder A.J."/>
            <person name="Shu S.Q."/>
            <person name="Stapleton M."/>
            <person name="Yamada C."/>
            <person name="Ashburner M."/>
            <person name="Gelbart W.M."/>
            <person name="Rubin G.M."/>
            <person name="Lewis S.E."/>
        </authorList>
    </citation>
    <scope>GENOME REANNOTATION</scope>
    <source>
        <strain>Berkeley</strain>
    </source>
</reference>
<reference key="3">
    <citation type="submission" date="2005-06" db="EMBL/GenBank/DDBJ databases">
        <authorList>
            <person name="Stapleton M."/>
            <person name="Carlson J.W."/>
            <person name="Chavez C."/>
            <person name="Frise E."/>
            <person name="George R.A."/>
            <person name="Pacleb J.M."/>
            <person name="Park S."/>
            <person name="Wan K.H."/>
            <person name="Yu C."/>
            <person name="Celniker S.E."/>
        </authorList>
    </citation>
    <scope>NUCLEOTIDE SEQUENCE [LARGE SCALE MRNA]</scope>
    <source>
        <strain>Berkeley</strain>
    </source>
</reference>
<name>ASTER_DROME</name>
<organism>
    <name type="scientific">Drosophila melanogaster</name>
    <name type="common">Fruit fly</name>
    <dbReference type="NCBI Taxonomy" id="7227"/>
    <lineage>
        <taxon>Eukaryota</taxon>
        <taxon>Metazoa</taxon>
        <taxon>Ecdysozoa</taxon>
        <taxon>Arthropoda</taxon>
        <taxon>Hexapoda</taxon>
        <taxon>Insecta</taxon>
        <taxon>Pterygota</taxon>
        <taxon>Neoptera</taxon>
        <taxon>Endopterygota</taxon>
        <taxon>Diptera</taxon>
        <taxon>Brachycera</taxon>
        <taxon>Muscomorpha</taxon>
        <taxon>Ephydroidea</taxon>
        <taxon>Drosophilidae</taxon>
        <taxon>Drosophila</taxon>
        <taxon>Sophophora</taxon>
    </lineage>
</organism>
<protein>
    <recommendedName>
        <fullName>Protein Asterix</fullName>
    </recommendedName>
</protein>
<dbReference type="EMBL" id="AE014296">
    <property type="protein sequence ID" value="AAF50797.1"/>
    <property type="molecule type" value="Genomic_DNA"/>
</dbReference>
<dbReference type="EMBL" id="BT023649">
    <property type="protein sequence ID" value="AAY85049.1"/>
    <property type="molecule type" value="mRNA"/>
</dbReference>
<dbReference type="RefSeq" id="NP_647950.1">
    <property type="nucleotide sequence ID" value="NM_139693.2"/>
</dbReference>
<dbReference type="SMR" id="Q9VRJ8"/>
<dbReference type="BioGRID" id="64070">
    <property type="interactions" value="4"/>
</dbReference>
<dbReference type="DIP" id="DIP-18656N"/>
<dbReference type="FunCoup" id="Q9VRJ8">
    <property type="interactions" value="940"/>
</dbReference>
<dbReference type="IntAct" id="Q9VRJ8">
    <property type="interactions" value="5"/>
</dbReference>
<dbReference type="STRING" id="7227.FBpp0076884"/>
<dbReference type="PaxDb" id="7227-FBpp0076884"/>
<dbReference type="DNASU" id="38602"/>
<dbReference type="EnsemblMetazoa" id="FBtr0077181">
    <property type="protein sequence ID" value="FBpp0076884"/>
    <property type="gene ID" value="FBgn0035592"/>
</dbReference>
<dbReference type="GeneID" id="38602"/>
<dbReference type="KEGG" id="dme:Dmel_CG10674"/>
<dbReference type="UCSC" id="CG10674-RA">
    <property type="organism name" value="d. melanogaster"/>
</dbReference>
<dbReference type="AGR" id="FB:FBgn0035592"/>
<dbReference type="FlyBase" id="FBgn0035592">
    <property type="gene designation" value="CG10674"/>
</dbReference>
<dbReference type="VEuPathDB" id="VectorBase:FBgn0035592"/>
<dbReference type="eggNOG" id="KOG3462">
    <property type="taxonomic scope" value="Eukaryota"/>
</dbReference>
<dbReference type="GeneTree" id="ENSGT00390000002121"/>
<dbReference type="HOGENOM" id="CLU_128526_1_1_1"/>
<dbReference type="InParanoid" id="Q9VRJ8"/>
<dbReference type="OMA" id="MFGLMMK"/>
<dbReference type="OrthoDB" id="284718at2759"/>
<dbReference type="PhylomeDB" id="Q9VRJ8"/>
<dbReference type="BioGRID-ORCS" id="38602">
    <property type="hits" value="0 hits in 1 CRISPR screen"/>
</dbReference>
<dbReference type="GenomeRNAi" id="38602"/>
<dbReference type="PRO" id="PR:Q9VRJ8"/>
<dbReference type="Proteomes" id="UP000000803">
    <property type="component" value="Chromosome 3L"/>
</dbReference>
<dbReference type="Bgee" id="FBgn0035592">
    <property type="expression patterns" value="Expressed in adult anterior midgut class II enteroendocrine cell in adult midgut (Drosophila) and 133 other cell types or tissues"/>
</dbReference>
<dbReference type="GO" id="GO:0005789">
    <property type="term" value="C:endoplasmic reticulum membrane"/>
    <property type="evidence" value="ECO:0000318"/>
    <property type="project" value="GO_Central"/>
</dbReference>
<dbReference type="GO" id="GO:0044183">
    <property type="term" value="F:protein folding chaperone"/>
    <property type="evidence" value="ECO:0000318"/>
    <property type="project" value="GO_Central"/>
</dbReference>
<dbReference type="GO" id="GO:0045048">
    <property type="term" value="P:protein insertion into ER membrane"/>
    <property type="evidence" value="ECO:0000318"/>
    <property type="project" value="GO_Central"/>
</dbReference>
<dbReference type="InterPro" id="IPR005351">
    <property type="entry name" value="ASTER"/>
</dbReference>
<dbReference type="PANTHER" id="PTHR13193">
    <property type="entry name" value="CGI-140"/>
    <property type="match status" value="1"/>
</dbReference>
<dbReference type="PANTHER" id="PTHR13193:SF0">
    <property type="entry name" value="PAT COMPLEX SUBUNIT ASTERIX"/>
    <property type="match status" value="1"/>
</dbReference>
<dbReference type="Pfam" id="PF03669">
    <property type="entry name" value="ASTER"/>
    <property type="match status" value="1"/>
</dbReference>
<keyword id="KW-0472">Membrane</keyword>
<keyword id="KW-1185">Reference proteome</keyword>
<keyword id="KW-0812">Transmembrane</keyword>
<keyword id="KW-1133">Transmembrane helix</keyword>